<evidence type="ECO:0000250" key="1"/>
<evidence type="ECO:0000250" key="2">
    <source>
        <dbReference type="UniProtKB" id="Q86W26"/>
    </source>
</evidence>
<evidence type="ECO:0000255" key="3">
    <source>
        <dbReference type="PROSITE-ProRule" id="PRU00061"/>
    </source>
</evidence>
<evidence type="ECO:0000255" key="4">
    <source>
        <dbReference type="PROSITE-ProRule" id="PRU00136"/>
    </source>
</evidence>
<evidence type="ECO:0000256" key="5">
    <source>
        <dbReference type="SAM" id="MobiDB-lite"/>
    </source>
</evidence>
<evidence type="ECO:0000269" key="6">
    <source>
    </source>
</evidence>
<evidence type="ECO:0000269" key="7">
    <source>
    </source>
</evidence>
<evidence type="ECO:0000269" key="8">
    <source>
    </source>
</evidence>
<evidence type="ECO:0000269" key="9">
    <source>
    </source>
</evidence>
<evidence type="ECO:0000269" key="10">
    <source>
    </source>
</evidence>
<evidence type="ECO:0000303" key="11">
    <source>
    </source>
</evidence>
<evidence type="ECO:0000303" key="12">
    <source>
    </source>
</evidence>
<evidence type="ECO:0000305" key="13"/>
<evidence type="ECO:0007829" key="14">
    <source>
        <dbReference type="PDB" id="2DO9"/>
    </source>
</evidence>
<sequence>MALARANSPQEALLWALNDLEENSFKTLKFHLRDVTQFHLARGELESLSQVDLASKLISMYGAQEAVRVVSRSLLAMNLMELVDYLNQVCLNDYREIYREHVRCLEERQDWGVNSSHNKLLLMATSSSGGRRSPSCSDLEQELDPVDVETLFAPEAESYSTPPIVVMQGSAGTGKTTLVKKLVQDWSKGKLYPGQFDYVFYVSCREVVLLPKCDLPNLICWCCGDDQAPVTEILRQPGRLLFILDGYDELQKSSRAECVLHILMRRREVPCSLLITTRPPALQSLEPMLGERRHVLVLGFSEEERETYFSSCFTDKEQLKNALEFVQNNAVLYKACQVPGICWVVCSWLKKKMARGQEVSETPSNSTDIFTAYVSTFLPTDGNGDSSELTRHKVLKSLCSLAAEGMRHQRLLFEEEVLRKHGLDGPSLTAFLNCIDYRAGLGIKKFYSFRHISFQEFFYAMSFLVKEDQSQQGEATHKEVAKLVDPENHEEVTLSLQFLFDMLKTEGTLSLGLKFCFRIAPSVRQDLKHFKEQIEAIKYKRSWDLEFSLYDSKIKKLTQGIQMKDVILNVQHLDEKKSDKKKSVSVTSSFSSGKVQSPFLGNDKSTRKQKKASNGKSRGAEEPAPGVRNRRLASREKGHMEMNDKEDGGVEEQEDEEGQTLKKDGEMIDKMNG</sequence>
<reference key="1">
    <citation type="journal article" date="2005" name="Science">
        <title>The transcriptional landscape of the mammalian genome.</title>
        <authorList>
            <person name="Carninci P."/>
            <person name="Kasukawa T."/>
            <person name="Katayama S."/>
            <person name="Gough J."/>
            <person name="Frith M.C."/>
            <person name="Maeda N."/>
            <person name="Oyama R."/>
            <person name="Ravasi T."/>
            <person name="Lenhard B."/>
            <person name="Wells C."/>
            <person name="Kodzius R."/>
            <person name="Shimokawa K."/>
            <person name="Bajic V.B."/>
            <person name="Brenner S.E."/>
            <person name="Batalov S."/>
            <person name="Forrest A.R."/>
            <person name="Zavolan M."/>
            <person name="Davis M.J."/>
            <person name="Wilming L.G."/>
            <person name="Aidinis V."/>
            <person name="Allen J.E."/>
            <person name="Ambesi-Impiombato A."/>
            <person name="Apweiler R."/>
            <person name="Aturaliya R.N."/>
            <person name="Bailey T.L."/>
            <person name="Bansal M."/>
            <person name="Baxter L."/>
            <person name="Beisel K.W."/>
            <person name="Bersano T."/>
            <person name="Bono H."/>
            <person name="Chalk A.M."/>
            <person name="Chiu K.P."/>
            <person name="Choudhary V."/>
            <person name="Christoffels A."/>
            <person name="Clutterbuck D.R."/>
            <person name="Crowe M.L."/>
            <person name="Dalla E."/>
            <person name="Dalrymple B.P."/>
            <person name="de Bono B."/>
            <person name="Della Gatta G."/>
            <person name="di Bernardo D."/>
            <person name="Down T."/>
            <person name="Engstrom P."/>
            <person name="Fagiolini M."/>
            <person name="Faulkner G."/>
            <person name="Fletcher C.F."/>
            <person name="Fukushima T."/>
            <person name="Furuno M."/>
            <person name="Futaki S."/>
            <person name="Gariboldi M."/>
            <person name="Georgii-Hemming P."/>
            <person name="Gingeras T.R."/>
            <person name="Gojobori T."/>
            <person name="Green R.E."/>
            <person name="Gustincich S."/>
            <person name="Harbers M."/>
            <person name="Hayashi Y."/>
            <person name="Hensch T.K."/>
            <person name="Hirokawa N."/>
            <person name="Hill D."/>
            <person name="Huminiecki L."/>
            <person name="Iacono M."/>
            <person name="Ikeo K."/>
            <person name="Iwama A."/>
            <person name="Ishikawa T."/>
            <person name="Jakt M."/>
            <person name="Kanapin A."/>
            <person name="Katoh M."/>
            <person name="Kawasawa Y."/>
            <person name="Kelso J."/>
            <person name="Kitamura H."/>
            <person name="Kitano H."/>
            <person name="Kollias G."/>
            <person name="Krishnan S.P."/>
            <person name="Kruger A."/>
            <person name="Kummerfeld S.K."/>
            <person name="Kurochkin I.V."/>
            <person name="Lareau L.F."/>
            <person name="Lazarevic D."/>
            <person name="Lipovich L."/>
            <person name="Liu J."/>
            <person name="Liuni S."/>
            <person name="McWilliam S."/>
            <person name="Madan Babu M."/>
            <person name="Madera M."/>
            <person name="Marchionni L."/>
            <person name="Matsuda H."/>
            <person name="Matsuzawa S."/>
            <person name="Miki H."/>
            <person name="Mignone F."/>
            <person name="Miyake S."/>
            <person name="Morris K."/>
            <person name="Mottagui-Tabar S."/>
            <person name="Mulder N."/>
            <person name="Nakano N."/>
            <person name="Nakauchi H."/>
            <person name="Ng P."/>
            <person name="Nilsson R."/>
            <person name="Nishiguchi S."/>
            <person name="Nishikawa S."/>
            <person name="Nori F."/>
            <person name="Ohara O."/>
            <person name="Okazaki Y."/>
            <person name="Orlando V."/>
            <person name="Pang K.C."/>
            <person name="Pavan W.J."/>
            <person name="Pavesi G."/>
            <person name="Pesole G."/>
            <person name="Petrovsky N."/>
            <person name="Piazza S."/>
            <person name="Reed J."/>
            <person name="Reid J.F."/>
            <person name="Ring B.Z."/>
            <person name="Ringwald M."/>
            <person name="Rost B."/>
            <person name="Ruan Y."/>
            <person name="Salzberg S.L."/>
            <person name="Sandelin A."/>
            <person name="Schneider C."/>
            <person name="Schoenbach C."/>
            <person name="Sekiguchi K."/>
            <person name="Semple C.A."/>
            <person name="Seno S."/>
            <person name="Sessa L."/>
            <person name="Sheng Y."/>
            <person name="Shibata Y."/>
            <person name="Shimada H."/>
            <person name="Shimada K."/>
            <person name="Silva D."/>
            <person name="Sinclair B."/>
            <person name="Sperling S."/>
            <person name="Stupka E."/>
            <person name="Sugiura K."/>
            <person name="Sultana R."/>
            <person name="Takenaka Y."/>
            <person name="Taki K."/>
            <person name="Tammoja K."/>
            <person name="Tan S.L."/>
            <person name="Tang S."/>
            <person name="Taylor M.S."/>
            <person name="Tegner J."/>
            <person name="Teichmann S.A."/>
            <person name="Ueda H.R."/>
            <person name="van Nimwegen E."/>
            <person name="Verardo R."/>
            <person name="Wei C.L."/>
            <person name="Yagi K."/>
            <person name="Yamanishi H."/>
            <person name="Zabarovsky E."/>
            <person name="Zhu S."/>
            <person name="Zimmer A."/>
            <person name="Hide W."/>
            <person name="Bult C."/>
            <person name="Grimmond S.M."/>
            <person name="Teasdale R.D."/>
            <person name="Liu E.T."/>
            <person name="Brusic V."/>
            <person name="Quackenbush J."/>
            <person name="Wahlestedt C."/>
            <person name="Mattick J.S."/>
            <person name="Hume D.A."/>
            <person name="Kai C."/>
            <person name="Sasaki D."/>
            <person name="Tomaru Y."/>
            <person name="Fukuda S."/>
            <person name="Kanamori-Katayama M."/>
            <person name="Suzuki M."/>
            <person name="Aoki J."/>
            <person name="Arakawa T."/>
            <person name="Iida J."/>
            <person name="Imamura K."/>
            <person name="Itoh M."/>
            <person name="Kato T."/>
            <person name="Kawaji H."/>
            <person name="Kawagashira N."/>
            <person name="Kawashima T."/>
            <person name="Kojima M."/>
            <person name="Kondo S."/>
            <person name="Konno H."/>
            <person name="Nakano K."/>
            <person name="Ninomiya N."/>
            <person name="Nishio T."/>
            <person name="Okada M."/>
            <person name="Plessy C."/>
            <person name="Shibata K."/>
            <person name="Shiraki T."/>
            <person name="Suzuki S."/>
            <person name="Tagami M."/>
            <person name="Waki K."/>
            <person name="Watahiki A."/>
            <person name="Okamura-Oho Y."/>
            <person name="Suzuki H."/>
            <person name="Kawai J."/>
            <person name="Hayashizaki Y."/>
        </authorList>
    </citation>
    <scope>NUCLEOTIDE SEQUENCE [LARGE SCALE MRNA]</scope>
    <source>
        <strain>C57BL/6J</strain>
        <tissue>Olfactory bulb</tissue>
    </source>
</reference>
<reference key="2">
    <citation type="journal article" date="2004" name="Int. Immunol.">
        <title>PYNOD, a novel Apaf-1/CED4-like protein is an inhibitor of ASC and caspase-1.</title>
        <authorList>
            <person name="Wang Y."/>
            <person name="Hasegawa M."/>
            <person name="Imamura R."/>
            <person name="Kinoshita T."/>
            <person name="Kondo C."/>
            <person name="Konaka K."/>
            <person name="Suda T."/>
        </authorList>
    </citation>
    <scope>INTERACTION WITH CASP1 AND IL1B</scope>
    <source>
        <tissue>Heart</tissue>
    </source>
</reference>
<reference key="3">
    <citation type="journal article" date="2010" name="J. Immunol.">
        <title>Anti-inflammatory activity of PYNOD and its mechanism in humans and mice.</title>
        <authorList>
            <person name="Imamura R."/>
            <person name="Wang Y."/>
            <person name="Kinoshita T."/>
            <person name="Suzuki M."/>
            <person name="Noda T."/>
            <person name="Sagara J."/>
            <person name="Taniguchi S."/>
            <person name="Okamoto H."/>
            <person name="Suda T."/>
        </authorList>
    </citation>
    <scope>TISSUE SPECIFICITY</scope>
</reference>
<reference key="4">
    <citation type="journal article" date="2012" name="J. Immunol.">
        <title>Nlrp10 is essential for protective antifungal adaptive immunity against Candida albicans.</title>
        <authorList>
            <person name="Joly S."/>
            <person name="Eisenbarth S.C."/>
            <person name="Olivier A.K."/>
            <person name="Williams A."/>
            <person name="Kaplan D.H."/>
            <person name="Cassel S.L."/>
            <person name="Flavell R.A."/>
            <person name="Sutterwala F.S."/>
        </authorList>
    </citation>
    <scope>FUNCTION</scope>
    <scope>DISRUPTION PHENOTYPE</scope>
</reference>
<reference key="5">
    <citation type="journal article" date="2012" name="Nature">
        <title>NLRP10 is a NOD-like receptor essential to initiate adaptive immunity by dendritic cells.</title>
        <authorList>
            <person name="Eisenbarth S.C."/>
            <person name="Williams A."/>
            <person name="Colegio O.R."/>
            <person name="Meng H."/>
            <person name="Strowig T."/>
            <person name="Rongvaux A."/>
            <person name="Henao-Mejia J."/>
            <person name="Thaiss C.A."/>
            <person name="Joly S."/>
            <person name="Gonzalez D.G."/>
            <person name="Xu L."/>
            <person name="Zenewicz L.A."/>
            <person name="Haberman A.M."/>
            <person name="Elinav E."/>
            <person name="Kleinstein S.H."/>
            <person name="Sutterwala F.S."/>
            <person name="Flavell R.A."/>
        </authorList>
    </citation>
    <scope>DISRUPTION PHENOTYPE</scope>
</reference>
<reference key="6">
    <citation type="journal article" date="2016" name="Nature">
        <authorList>
            <person name="Eisenbarth S.C."/>
            <person name="Williams A."/>
            <person name="Colegio O.R."/>
            <person name="Meng H."/>
            <person name="Strowig T."/>
            <person name="Rongvaux A."/>
            <person name="Henao-Mejia J."/>
            <person name="Thaiss C.A."/>
            <person name="Joly S."/>
            <person name="Gonzalez D.G."/>
            <person name="Xu L."/>
            <person name="Zenewicz L.A."/>
            <person name="Haberman A.M."/>
            <person name="Elinav E."/>
            <person name="Kleinstein S.H."/>
            <person name="Sutterwala F.S."/>
            <person name="Flavell R.A."/>
        </authorList>
    </citation>
    <scope>ERRATUM OF PUBMED:22538615</scope>
</reference>
<reference key="7">
    <citation type="journal article" date="2016" name="Eur. J. Immunol.">
        <title>Epidermal NLRP10 contributes to contact hypersensitivity responses in mice.</title>
        <authorList>
            <person name="Damm A."/>
            <person name="Giebeler N."/>
            <person name="Zamek J."/>
            <person name="Zigrino P."/>
            <person name="Kufer T.A."/>
        </authorList>
    </citation>
    <scope>FUNCTION</scope>
    <scope>DISRUPTION PHENOTYPE</scope>
</reference>
<reference key="8">
    <citation type="submission" date="2006-10" db="PDB data bank">
        <title>Solution structure of the pyrin/paad-dapin domain in mouse NALP10 (NACHT, leucine rich repeat and PYD containing 10).</title>
        <authorList>
            <consortium name="RIKEN structural genomics initiative (RSGI)"/>
        </authorList>
    </citation>
    <scope>STRUCTURE BY NMR OF 1-102</scope>
</reference>
<protein>
    <recommendedName>
        <fullName>NACHT, LRR and PYD domains-containing protein 10</fullName>
    </recommendedName>
</protein>
<proteinExistence type="evidence at protein level"/>
<comment type="function">
    <text evidence="2 9 10">Inhibits autoprocessing of CASP1, CASP1-dependent IL1B secretion, PYCARD aggregation and PYCARD-mediated apoptosis but not apoptosis induced by FAS or BID (By similarity). Displays anti-inflammatory activity (By similarity). Required for immunity against C.albicans infection (PubMed:23071280). Involved in the innate immune response by contributing to pro-inflammatory cytokine release in response to invasive bacterial infection (By similarity). Contributes to T-cell-mediated inflammatory responses in the skin (PubMed:27221772). Plays a role in protection against periodontitis through its involvement in induction of IL1A via ERK activation in oral epithelial cells infected with periodontal pathogens (By similarity). Exhibits both ATPase and GTPase activities (By similarity).</text>
</comment>
<comment type="subunit">
    <text evidence="2 6">Oligomerizes (By similarity). Interacts with PYCARD (By similarity). Also interacts with CASP1 and IL1B (PubMed:15096476). Interacts with NOD1 and components of the NOD1 signaling pathway including RIPK2, NR2C2/TAK1 and IKBKG/NEMO (By similarity).</text>
</comment>
<comment type="subcellular location">
    <subcellularLocation>
        <location evidence="2">Cytoplasm</location>
    </subcellularLocation>
    <subcellularLocation>
        <location evidence="2">Cell membrane</location>
        <topology evidence="13">Peripheral membrane protein</topology>
    </subcellularLocation>
    <text evidence="2">Cytoplasmic protein which is recruited to the cell membrane by NOD1 following invasive bacterial infection.</text>
</comment>
<comment type="tissue specificity">
    <text evidence="7">Expressed in skin, tongue, heart, colon and several cell lines of hematopoietic and myocytic origin but not in kidney, skeletal muscle, spleen, liver, lung, thymus, brain or small intestine (at protein level).</text>
</comment>
<comment type="domain">
    <text evidence="1">The pyrin and ATP-binding domains are required to elicit cytokine release following bacterial infection.</text>
</comment>
<comment type="domain">
    <text evidence="1">The NACHT domain is required for inhibition of CASP1 autoprocessing.</text>
</comment>
<comment type="disruption phenotype">
    <text evidence="8 9 10">High susceptibility to systemic infection by C.albicans with 100% mortality by day 16 post-infection (PubMed:23071280). Does not alter Nlrp3 inflammasome activity and up-regulates Gdpd3 expression (PubMed:22538615). Does not impair skin repair after wounding (PubMed:27221772). Also does not impair the irritant contact dermatitis response following treatment with the irritant croton oil (PubMed:27221772). Significantly reduced inflammation in dinitrofluorobenzene-induced contact hypersensitivity response with reduced numbers of CD3(+), CD8(+) and CD4(+) T cells (PubMed:27221772).</text>
</comment>
<comment type="similarity">
    <text evidence="13">Belongs to the NLRP family.</text>
</comment>
<comment type="caution">
    <text evidence="13">Despite its official name, does not contain LRR repeats.</text>
</comment>
<comment type="caution">
    <text evidence="11 12">Was originally thought to play a role in adaptive immunity through control of dendritic cell-mediated antigen transport to lymph nodes from peripheral sites (PubMed:22538615). However, this was later shown to be dependent on DOCK8 (PubMed:26605525).</text>
</comment>
<feature type="chain" id="PRO_0000080897" description="NACHT, LRR and PYD domains-containing protein 10">
    <location>
        <begin position="1"/>
        <end position="673"/>
    </location>
</feature>
<feature type="domain" description="Pyrin" evidence="3">
    <location>
        <begin position="1"/>
        <end position="92"/>
    </location>
</feature>
<feature type="domain" description="NACHT" evidence="4">
    <location>
        <begin position="163"/>
        <end position="469"/>
    </location>
</feature>
<feature type="region of interest" description="Disordered" evidence="5">
    <location>
        <begin position="578"/>
        <end position="673"/>
    </location>
</feature>
<feature type="compositionally biased region" description="Low complexity" evidence="5">
    <location>
        <begin position="584"/>
        <end position="597"/>
    </location>
</feature>
<feature type="compositionally biased region" description="Basic and acidic residues" evidence="5">
    <location>
        <begin position="633"/>
        <end position="648"/>
    </location>
</feature>
<feature type="compositionally biased region" description="Acidic residues" evidence="5">
    <location>
        <begin position="649"/>
        <end position="658"/>
    </location>
</feature>
<feature type="compositionally biased region" description="Basic and acidic residues" evidence="5">
    <location>
        <begin position="659"/>
        <end position="673"/>
    </location>
</feature>
<feature type="binding site" evidence="4">
    <location>
        <begin position="169"/>
        <end position="176"/>
    </location>
    <ligand>
        <name>ATP</name>
        <dbReference type="ChEBI" id="CHEBI:30616"/>
    </ligand>
</feature>
<feature type="helix" evidence="14">
    <location>
        <begin position="9"/>
        <end position="19"/>
    </location>
</feature>
<feature type="helix" evidence="14">
    <location>
        <begin position="22"/>
        <end position="36"/>
    </location>
</feature>
<feature type="strand" evidence="14">
    <location>
        <begin position="42"/>
        <end position="44"/>
    </location>
</feature>
<feature type="turn" evidence="14">
    <location>
        <begin position="45"/>
        <end position="47"/>
    </location>
</feature>
<feature type="helix" evidence="14">
    <location>
        <begin position="52"/>
        <end position="60"/>
    </location>
</feature>
<feature type="helix" evidence="14">
    <location>
        <begin position="63"/>
        <end position="77"/>
    </location>
</feature>
<feature type="helix" evidence="14">
    <location>
        <begin position="80"/>
        <end position="88"/>
    </location>
</feature>
<feature type="strand" evidence="14">
    <location>
        <begin position="97"/>
        <end position="99"/>
    </location>
</feature>
<dbReference type="EMBL" id="AK032446">
    <property type="protein sequence ID" value="BAC27872.1"/>
    <property type="molecule type" value="mRNA"/>
</dbReference>
<dbReference type="CCDS" id="CCDS21730.1"/>
<dbReference type="RefSeq" id="NP_780741.1">
    <property type="nucleotide sequence ID" value="NM_175532.3"/>
</dbReference>
<dbReference type="PDB" id="2DO9">
    <property type="method" value="NMR"/>
    <property type="chains" value="A=1-102"/>
</dbReference>
<dbReference type="PDBsum" id="2DO9"/>
<dbReference type="SMR" id="Q8CCN1"/>
<dbReference type="BioGRID" id="232621">
    <property type="interactions" value="1"/>
</dbReference>
<dbReference type="FunCoup" id="Q8CCN1">
    <property type="interactions" value="47"/>
</dbReference>
<dbReference type="STRING" id="10090.ENSMUSP00000050252"/>
<dbReference type="iPTMnet" id="Q8CCN1"/>
<dbReference type="PhosphoSitePlus" id="Q8CCN1"/>
<dbReference type="PaxDb" id="10090-ENSMUSP00000050252"/>
<dbReference type="ProteomicsDB" id="287604"/>
<dbReference type="Antibodypedia" id="42324">
    <property type="antibodies" value="198 antibodies from 31 providers"/>
</dbReference>
<dbReference type="DNASU" id="244202"/>
<dbReference type="Ensembl" id="ENSMUST00000055745.5">
    <property type="protein sequence ID" value="ENSMUSP00000050252.4"/>
    <property type="gene ID" value="ENSMUSG00000049709.5"/>
</dbReference>
<dbReference type="GeneID" id="244202"/>
<dbReference type="KEGG" id="mmu:244202"/>
<dbReference type="UCSC" id="uc009jdb.1">
    <property type="organism name" value="mouse"/>
</dbReference>
<dbReference type="AGR" id="MGI:2444084"/>
<dbReference type="CTD" id="338322"/>
<dbReference type="MGI" id="MGI:2444084">
    <property type="gene designation" value="Nlrp10"/>
</dbReference>
<dbReference type="VEuPathDB" id="HostDB:ENSMUSG00000049709"/>
<dbReference type="eggNOG" id="ENOG502QTJW">
    <property type="taxonomic scope" value="Eukaryota"/>
</dbReference>
<dbReference type="GeneTree" id="ENSGT00940000159520"/>
<dbReference type="HOGENOM" id="CLU_002274_2_3_1"/>
<dbReference type="InParanoid" id="Q8CCN1"/>
<dbReference type="OMA" id="EMTLSMQ"/>
<dbReference type="OrthoDB" id="120976at2759"/>
<dbReference type="PhylomeDB" id="Q8CCN1"/>
<dbReference type="BioGRID-ORCS" id="244202">
    <property type="hits" value="4 hits in 78 CRISPR screens"/>
</dbReference>
<dbReference type="ChiTaRS" id="Nlrp10">
    <property type="organism name" value="mouse"/>
</dbReference>
<dbReference type="EvolutionaryTrace" id="Q8CCN1"/>
<dbReference type="PRO" id="PR:Q8CCN1"/>
<dbReference type="Proteomes" id="UP000000589">
    <property type="component" value="Chromosome 7"/>
</dbReference>
<dbReference type="RNAct" id="Q8CCN1">
    <property type="molecule type" value="protein"/>
</dbReference>
<dbReference type="Bgee" id="ENSMUSG00000049709">
    <property type="expression patterns" value="Expressed in interventricular septum and 56 other cell types or tissues"/>
</dbReference>
<dbReference type="ExpressionAtlas" id="Q8CCN1">
    <property type="expression patterns" value="baseline and differential"/>
</dbReference>
<dbReference type="GO" id="GO:0005737">
    <property type="term" value="C:cytoplasm"/>
    <property type="evidence" value="ECO:0000250"/>
    <property type="project" value="UniProtKB"/>
</dbReference>
<dbReference type="GO" id="GO:0009898">
    <property type="term" value="C:cytoplasmic side of plasma membrane"/>
    <property type="evidence" value="ECO:0000250"/>
    <property type="project" value="UniProtKB"/>
</dbReference>
<dbReference type="GO" id="GO:0005829">
    <property type="term" value="C:cytosol"/>
    <property type="evidence" value="ECO:0007669"/>
    <property type="project" value="Ensembl"/>
</dbReference>
<dbReference type="GO" id="GO:0031965">
    <property type="term" value="C:nuclear membrane"/>
    <property type="evidence" value="ECO:0007669"/>
    <property type="project" value="Ensembl"/>
</dbReference>
<dbReference type="GO" id="GO:0005654">
    <property type="term" value="C:nucleoplasm"/>
    <property type="evidence" value="ECO:0007669"/>
    <property type="project" value="Ensembl"/>
</dbReference>
<dbReference type="GO" id="GO:0005524">
    <property type="term" value="F:ATP binding"/>
    <property type="evidence" value="ECO:0007669"/>
    <property type="project" value="UniProtKB-KW"/>
</dbReference>
<dbReference type="GO" id="GO:0016887">
    <property type="term" value="F:ATP hydrolysis activity"/>
    <property type="evidence" value="ECO:0000250"/>
    <property type="project" value="UniProtKB"/>
</dbReference>
<dbReference type="GO" id="GO:0003924">
    <property type="term" value="F:GTPase activity"/>
    <property type="evidence" value="ECO:0000250"/>
    <property type="project" value="UniProtKB"/>
</dbReference>
<dbReference type="GO" id="GO:0002218">
    <property type="term" value="P:activation of innate immune response"/>
    <property type="evidence" value="ECO:0000250"/>
    <property type="project" value="UniProtKB"/>
</dbReference>
<dbReference type="GO" id="GO:0002250">
    <property type="term" value="P:adaptive immune response"/>
    <property type="evidence" value="ECO:0007669"/>
    <property type="project" value="UniProtKB-KW"/>
</dbReference>
<dbReference type="GO" id="GO:0050832">
    <property type="term" value="P:defense response to fungus"/>
    <property type="evidence" value="ECO:0000315"/>
    <property type="project" value="UniProtKB"/>
</dbReference>
<dbReference type="GO" id="GO:0006954">
    <property type="term" value="P:inflammatory response"/>
    <property type="evidence" value="ECO:0007669"/>
    <property type="project" value="UniProtKB-KW"/>
</dbReference>
<dbReference type="GO" id="GO:0045087">
    <property type="term" value="P:innate immune response"/>
    <property type="evidence" value="ECO:0007669"/>
    <property type="project" value="UniProtKB-KW"/>
</dbReference>
<dbReference type="GO" id="GO:1900426">
    <property type="term" value="P:positive regulation of defense response to bacterium"/>
    <property type="evidence" value="ECO:0000250"/>
    <property type="project" value="UniProtKB"/>
</dbReference>
<dbReference type="GO" id="GO:0050729">
    <property type="term" value="P:positive regulation of inflammatory response"/>
    <property type="evidence" value="ECO:0000315"/>
    <property type="project" value="UniProtKB"/>
</dbReference>
<dbReference type="GO" id="GO:0032730">
    <property type="term" value="P:positive regulation of interleukin-1 alpha production"/>
    <property type="evidence" value="ECO:0000250"/>
    <property type="project" value="UniProtKB"/>
</dbReference>
<dbReference type="GO" id="GO:0032755">
    <property type="term" value="P:positive regulation of interleukin-6 production"/>
    <property type="evidence" value="ECO:0000250"/>
    <property type="project" value="UniProtKB"/>
</dbReference>
<dbReference type="GO" id="GO:0032757">
    <property type="term" value="P:positive regulation of interleukin-8 production"/>
    <property type="evidence" value="ECO:0000250"/>
    <property type="project" value="UniProtKB"/>
</dbReference>
<dbReference type="GO" id="GO:0002827">
    <property type="term" value="P:positive regulation of T-helper 1 type immune response"/>
    <property type="evidence" value="ECO:0000315"/>
    <property type="project" value="UniProtKB"/>
</dbReference>
<dbReference type="GO" id="GO:2000318">
    <property type="term" value="P:positive regulation of T-helper 17 type immune response"/>
    <property type="evidence" value="ECO:0000315"/>
    <property type="project" value="UniProtKB"/>
</dbReference>
<dbReference type="CDD" id="cd08321">
    <property type="entry name" value="Pyrin_ASC-like"/>
    <property type="match status" value="1"/>
</dbReference>
<dbReference type="FunFam" id="3.40.50.300:FF:002112">
    <property type="entry name" value="NLR family pyrin domain containing 10"/>
    <property type="match status" value="1"/>
</dbReference>
<dbReference type="Gene3D" id="1.10.533.10">
    <property type="entry name" value="Death Domain, Fas"/>
    <property type="match status" value="1"/>
</dbReference>
<dbReference type="Gene3D" id="3.40.50.300">
    <property type="entry name" value="P-loop containing nucleotide triphosphate hydrolases"/>
    <property type="match status" value="1"/>
</dbReference>
<dbReference type="InterPro" id="IPR004020">
    <property type="entry name" value="DAPIN"/>
</dbReference>
<dbReference type="InterPro" id="IPR011029">
    <property type="entry name" value="DEATH-like_dom_sf"/>
</dbReference>
<dbReference type="InterPro" id="IPR007111">
    <property type="entry name" value="NACHT_NTPase"/>
</dbReference>
<dbReference type="InterPro" id="IPR050637">
    <property type="entry name" value="NLRP_innate_immun_reg"/>
</dbReference>
<dbReference type="InterPro" id="IPR041075">
    <property type="entry name" value="NOD1/2_WH"/>
</dbReference>
<dbReference type="InterPro" id="IPR027417">
    <property type="entry name" value="P-loop_NTPase"/>
</dbReference>
<dbReference type="PANTHER" id="PTHR45690:SF4">
    <property type="entry name" value="NACHT, LRR AND PYD DOMAINS-CONTAINING PROTEIN 10"/>
    <property type="match status" value="1"/>
</dbReference>
<dbReference type="PANTHER" id="PTHR45690">
    <property type="entry name" value="NACHT, LRR AND PYD DOMAINS-CONTAINING PROTEIN 12"/>
    <property type="match status" value="1"/>
</dbReference>
<dbReference type="Pfam" id="PF05729">
    <property type="entry name" value="NACHT"/>
    <property type="match status" value="1"/>
</dbReference>
<dbReference type="Pfam" id="PF17779">
    <property type="entry name" value="NOD2_WH"/>
    <property type="match status" value="1"/>
</dbReference>
<dbReference type="Pfam" id="PF02758">
    <property type="entry name" value="PYRIN"/>
    <property type="match status" value="1"/>
</dbReference>
<dbReference type="SMART" id="SM01289">
    <property type="entry name" value="PYRIN"/>
    <property type="match status" value="1"/>
</dbReference>
<dbReference type="SUPFAM" id="SSF47986">
    <property type="entry name" value="DEATH domain"/>
    <property type="match status" value="1"/>
</dbReference>
<dbReference type="SUPFAM" id="SSF52540">
    <property type="entry name" value="P-loop containing nucleoside triphosphate hydrolases"/>
    <property type="match status" value="1"/>
</dbReference>
<dbReference type="PROSITE" id="PS50824">
    <property type="entry name" value="DAPIN"/>
    <property type="match status" value="1"/>
</dbReference>
<dbReference type="PROSITE" id="PS50837">
    <property type="entry name" value="NACHT"/>
    <property type="match status" value="1"/>
</dbReference>
<keyword id="KW-0002">3D-structure</keyword>
<keyword id="KW-1064">Adaptive immunity</keyword>
<keyword id="KW-0067">ATP-binding</keyword>
<keyword id="KW-1003">Cell membrane</keyword>
<keyword id="KW-0963">Cytoplasm</keyword>
<keyword id="KW-0391">Immunity</keyword>
<keyword id="KW-0395">Inflammatory response</keyword>
<keyword id="KW-0399">Innate immunity</keyword>
<keyword id="KW-0472">Membrane</keyword>
<keyword id="KW-0547">Nucleotide-binding</keyword>
<keyword id="KW-1185">Reference proteome</keyword>
<name>NAL10_MOUSE</name>
<gene>
    <name type="primary">Nlrp10</name>
    <name type="synonym">Nalp10</name>
    <name type="synonym">Pynod</name>
</gene>
<accession>Q8CCN1</accession>
<organism>
    <name type="scientific">Mus musculus</name>
    <name type="common">Mouse</name>
    <dbReference type="NCBI Taxonomy" id="10090"/>
    <lineage>
        <taxon>Eukaryota</taxon>
        <taxon>Metazoa</taxon>
        <taxon>Chordata</taxon>
        <taxon>Craniata</taxon>
        <taxon>Vertebrata</taxon>
        <taxon>Euteleostomi</taxon>
        <taxon>Mammalia</taxon>
        <taxon>Eutheria</taxon>
        <taxon>Euarchontoglires</taxon>
        <taxon>Glires</taxon>
        <taxon>Rodentia</taxon>
        <taxon>Myomorpha</taxon>
        <taxon>Muroidea</taxon>
        <taxon>Muridae</taxon>
        <taxon>Murinae</taxon>
        <taxon>Mus</taxon>
        <taxon>Mus</taxon>
    </lineage>
</organism>